<sequence>MKEIWLLAESESWDEAKEMLKDAIEIGFDGALVRRDFLERAEKLGRMKIVPIEDAVVKISSAEDQERALQREVVVLKFEDWKVIPLENIVAMKKSGKVIAAVDTIEDAKLALTTLERGADGIAVSGDRETLRKFYEVVKEEGERVELVRARVKEIRPLGVGERVCIDTVTLMTPGEGMLVGNQASFMFLVASESEESEYVASRPFRVNAGSVNAYLKVGDKTRYLAELKAGDEVEVVKFDGAVRKSYVGRVKIERRPLILIRAEVDGVEGSVILQNAETIKLVAPDGKHVSVAELKPGDEILVWLGKKARHFGVEVDEFIVER</sequence>
<dbReference type="EC" id="1.4.1.24" evidence="1"/>
<dbReference type="EMBL" id="AE000782">
    <property type="protein sequence ID" value="AAB91003.1"/>
    <property type="molecule type" value="Genomic_DNA"/>
</dbReference>
<dbReference type="PIR" id="E69278">
    <property type="entry name" value="E69278"/>
</dbReference>
<dbReference type="RefSeq" id="WP_010877740.1">
    <property type="nucleotide sequence ID" value="NC_000917.1"/>
</dbReference>
<dbReference type="STRING" id="224325.AF_0229"/>
<dbReference type="PaxDb" id="224325-AF_0229"/>
<dbReference type="EnsemblBacteria" id="AAB91003">
    <property type="protein sequence ID" value="AAB91003"/>
    <property type="gene ID" value="AF_0229"/>
</dbReference>
<dbReference type="KEGG" id="afu:AF_0229"/>
<dbReference type="eggNOG" id="arCOG04353">
    <property type="taxonomic scope" value="Archaea"/>
</dbReference>
<dbReference type="HOGENOM" id="CLU_056379_0_0_2"/>
<dbReference type="OrthoDB" id="10265at2157"/>
<dbReference type="PhylomeDB" id="O30010"/>
<dbReference type="Proteomes" id="UP000002199">
    <property type="component" value="Chromosome"/>
</dbReference>
<dbReference type="GO" id="GO:0003856">
    <property type="term" value="F:3-dehydroquinate synthase activity"/>
    <property type="evidence" value="ECO:0007669"/>
    <property type="project" value="InterPro"/>
</dbReference>
<dbReference type="GO" id="GO:0102042">
    <property type="term" value="F:dehydroquinate synthase activity"/>
    <property type="evidence" value="ECO:0007669"/>
    <property type="project" value="UniProtKB-EC"/>
</dbReference>
<dbReference type="GO" id="GO:0051287">
    <property type="term" value="F:NAD binding"/>
    <property type="evidence" value="ECO:0007669"/>
    <property type="project" value="UniProtKB-UniRule"/>
</dbReference>
<dbReference type="GO" id="GO:0008652">
    <property type="term" value="P:amino acid biosynthetic process"/>
    <property type="evidence" value="ECO:0007669"/>
    <property type="project" value="UniProtKB-KW"/>
</dbReference>
<dbReference type="GO" id="GO:0009073">
    <property type="term" value="P:aromatic amino acid family biosynthetic process"/>
    <property type="evidence" value="ECO:0007669"/>
    <property type="project" value="UniProtKB-UniRule"/>
</dbReference>
<dbReference type="HAMAP" id="MF_01244">
    <property type="entry name" value="Arch_DHQ_synthase"/>
    <property type="match status" value="1"/>
</dbReference>
<dbReference type="InterPro" id="IPR002812">
    <property type="entry name" value="DHQ_synth"/>
</dbReference>
<dbReference type="NCBIfam" id="NF002627">
    <property type="entry name" value="PRK02290.1-5"/>
    <property type="match status" value="1"/>
</dbReference>
<dbReference type="PANTHER" id="PTHR33563">
    <property type="match status" value="1"/>
</dbReference>
<dbReference type="PANTHER" id="PTHR33563:SF1">
    <property type="entry name" value="3-DEHYDROQUINATE SYNTHASE"/>
    <property type="match status" value="1"/>
</dbReference>
<dbReference type="Pfam" id="PF01959">
    <property type="entry name" value="DHQS"/>
    <property type="match status" value="1"/>
</dbReference>
<dbReference type="PIRSF" id="PIRSF006655">
    <property type="entry name" value="DHQ_synth"/>
    <property type="match status" value="1"/>
</dbReference>
<name>DHQS_ARCFU</name>
<feature type="chain" id="PRO_0000058766" description="3-dehydroquinate synthase">
    <location>
        <begin position="1"/>
        <end position="323"/>
    </location>
</feature>
<gene>
    <name evidence="1" type="primary">aroB'</name>
    <name type="ordered locus">AF_0229</name>
</gene>
<protein>
    <recommendedName>
        <fullName evidence="1">3-dehydroquinate synthase</fullName>
        <shortName evidence="1">DHQ synthase</shortName>
        <ecNumber evidence="1">1.4.1.24</ecNumber>
    </recommendedName>
    <alternativeName>
        <fullName evidence="1">3-dehydroquinate synthase II</fullName>
    </alternativeName>
</protein>
<organism>
    <name type="scientific">Archaeoglobus fulgidus (strain ATCC 49558 / DSM 4304 / JCM 9628 / NBRC 100126 / VC-16)</name>
    <dbReference type="NCBI Taxonomy" id="224325"/>
    <lineage>
        <taxon>Archaea</taxon>
        <taxon>Methanobacteriati</taxon>
        <taxon>Methanobacteriota</taxon>
        <taxon>Archaeoglobi</taxon>
        <taxon>Archaeoglobales</taxon>
        <taxon>Archaeoglobaceae</taxon>
        <taxon>Archaeoglobus</taxon>
    </lineage>
</organism>
<evidence type="ECO:0000255" key="1">
    <source>
        <dbReference type="HAMAP-Rule" id="MF_01244"/>
    </source>
</evidence>
<keyword id="KW-0028">Amino-acid biosynthesis</keyword>
<keyword id="KW-0057">Aromatic amino acid biosynthesis</keyword>
<keyword id="KW-0520">NAD</keyword>
<keyword id="KW-0560">Oxidoreductase</keyword>
<keyword id="KW-1185">Reference proteome</keyword>
<reference key="1">
    <citation type="journal article" date="1997" name="Nature">
        <title>The complete genome sequence of the hyperthermophilic, sulphate-reducing archaeon Archaeoglobus fulgidus.</title>
        <authorList>
            <person name="Klenk H.-P."/>
            <person name="Clayton R.A."/>
            <person name="Tomb J.-F."/>
            <person name="White O."/>
            <person name="Nelson K.E."/>
            <person name="Ketchum K.A."/>
            <person name="Dodson R.J."/>
            <person name="Gwinn M.L."/>
            <person name="Hickey E.K."/>
            <person name="Peterson J.D."/>
            <person name="Richardson D.L."/>
            <person name="Kerlavage A.R."/>
            <person name="Graham D.E."/>
            <person name="Kyrpides N.C."/>
            <person name="Fleischmann R.D."/>
            <person name="Quackenbush J."/>
            <person name="Lee N.H."/>
            <person name="Sutton G.G."/>
            <person name="Gill S.R."/>
            <person name="Kirkness E.F."/>
            <person name="Dougherty B.A."/>
            <person name="McKenney K."/>
            <person name="Adams M.D."/>
            <person name="Loftus B.J."/>
            <person name="Peterson S.N."/>
            <person name="Reich C.I."/>
            <person name="McNeil L.K."/>
            <person name="Badger J.H."/>
            <person name="Glodek A."/>
            <person name="Zhou L."/>
            <person name="Overbeek R."/>
            <person name="Gocayne J.D."/>
            <person name="Weidman J.F."/>
            <person name="McDonald L.A."/>
            <person name="Utterback T.R."/>
            <person name="Cotton M.D."/>
            <person name="Spriggs T."/>
            <person name="Artiach P."/>
            <person name="Kaine B.P."/>
            <person name="Sykes S.M."/>
            <person name="Sadow P.W."/>
            <person name="D'Andrea K.P."/>
            <person name="Bowman C."/>
            <person name="Fujii C."/>
            <person name="Garland S.A."/>
            <person name="Mason T.M."/>
            <person name="Olsen G.J."/>
            <person name="Fraser C.M."/>
            <person name="Smith H.O."/>
            <person name="Woese C.R."/>
            <person name="Venter J.C."/>
        </authorList>
    </citation>
    <scope>NUCLEOTIDE SEQUENCE [LARGE SCALE GENOMIC DNA]</scope>
    <source>
        <strain>ATCC 49558 / DSM 4304 / JCM 9628 / NBRC 100126 / VC-16</strain>
    </source>
</reference>
<accession>O30010</accession>
<proteinExistence type="inferred from homology"/>
<comment type="function">
    <text evidence="1">Catalyzes the oxidative deamination and cyclization of 2-amino-3,7-dideoxy-D-threo-hept-6-ulosonic acid (ADH) to yield 3-dehydroquinate (DHQ), which is fed into the canonical shikimic pathway of aromatic amino acid biosynthesis.</text>
</comment>
<comment type="catalytic activity">
    <reaction evidence="1">
        <text>2-amino-2,3,7-trideoxy-D-lyxo-hept-6-ulosonate + NAD(+) + H2O = 3-dehydroquinate + NH4(+) + NADH + H(+)</text>
        <dbReference type="Rhea" id="RHEA:25956"/>
        <dbReference type="ChEBI" id="CHEBI:15377"/>
        <dbReference type="ChEBI" id="CHEBI:15378"/>
        <dbReference type="ChEBI" id="CHEBI:28938"/>
        <dbReference type="ChEBI" id="CHEBI:32364"/>
        <dbReference type="ChEBI" id="CHEBI:57540"/>
        <dbReference type="ChEBI" id="CHEBI:57945"/>
        <dbReference type="ChEBI" id="CHEBI:58859"/>
        <dbReference type="EC" id="1.4.1.24"/>
    </reaction>
</comment>
<comment type="similarity">
    <text evidence="1">Belongs to the archaeal-type DHQ synthase family.</text>
</comment>